<gene>
    <name type="ORF">POPTRDRAFT_834139</name>
</gene>
<keyword id="KW-1003">Cell membrane</keyword>
<keyword id="KW-0472">Membrane</keyword>
<keyword id="KW-1185">Reference proteome</keyword>
<keyword id="KW-0812">Transmembrane</keyword>
<keyword id="KW-1133">Transmembrane helix</keyword>
<sequence>MEKRDKGSSPMATMMGSRDENEDVENTTRTAETMLRLVPMALCVSALVVMLKNTQTNDYGSLSYSDLGAFRYLVHVNGICAGYSLLSAVIVAMPRASTMPRAWAFFLLDQVLTYVILAAGTVSTEVLYLASKGDTTITWSEACVSFGGFCHKALISIVITFVVVICYAALSLLSSYKLFSKYDSPVLTYPGKGIEIATFHG</sequence>
<accession>B9I0G0</accession>
<reference key="1">
    <citation type="journal article" date="2006" name="Science">
        <title>The genome of black cottonwood, Populus trichocarpa (Torr. &amp; Gray).</title>
        <authorList>
            <person name="Tuskan G.A."/>
            <person name="Difazio S."/>
            <person name="Jansson S."/>
            <person name="Bohlmann J."/>
            <person name="Grigoriev I."/>
            <person name="Hellsten U."/>
            <person name="Putnam N."/>
            <person name="Ralph S."/>
            <person name="Rombauts S."/>
            <person name="Salamov A."/>
            <person name="Schein J."/>
            <person name="Sterck L."/>
            <person name="Aerts A."/>
            <person name="Bhalerao R.R."/>
            <person name="Bhalerao R.P."/>
            <person name="Blaudez D."/>
            <person name="Boerjan W."/>
            <person name="Brun A."/>
            <person name="Brunner A."/>
            <person name="Busov V."/>
            <person name="Campbell M."/>
            <person name="Carlson J."/>
            <person name="Chalot M."/>
            <person name="Chapman J."/>
            <person name="Chen G.-L."/>
            <person name="Cooper D."/>
            <person name="Coutinho P.M."/>
            <person name="Couturier J."/>
            <person name="Covert S."/>
            <person name="Cronk Q."/>
            <person name="Cunningham R."/>
            <person name="Davis J."/>
            <person name="Degroeve S."/>
            <person name="Dejardin A."/>
            <person name="dePamphilis C.W."/>
            <person name="Detter J."/>
            <person name="Dirks B."/>
            <person name="Dubchak I."/>
            <person name="Duplessis S."/>
            <person name="Ehlting J."/>
            <person name="Ellis B."/>
            <person name="Gendler K."/>
            <person name="Goodstein D."/>
            <person name="Gribskov M."/>
            <person name="Grimwood J."/>
            <person name="Groover A."/>
            <person name="Gunter L."/>
            <person name="Hamberger B."/>
            <person name="Heinze B."/>
            <person name="Helariutta Y."/>
            <person name="Henrissat B."/>
            <person name="Holligan D."/>
            <person name="Holt R."/>
            <person name="Huang W."/>
            <person name="Islam-Faridi N."/>
            <person name="Jones S."/>
            <person name="Jones-Rhoades M."/>
            <person name="Jorgensen R."/>
            <person name="Joshi C."/>
            <person name="Kangasjaervi J."/>
            <person name="Karlsson J."/>
            <person name="Kelleher C."/>
            <person name="Kirkpatrick R."/>
            <person name="Kirst M."/>
            <person name="Kohler A."/>
            <person name="Kalluri U."/>
            <person name="Larimer F."/>
            <person name="Leebens-Mack J."/>
            <person name="Leple J.-C."/>
            <person name="Locascio P."/>
            <person name="Lou Y."/>
            <person name="Lucas S."/>
            <person name="Martin F."/>
            <person name="Montanini B."/>
            <person name="Napoli C."/>
            <person name="Nelson D.R."/>
            <person name="Nelson C."/>
            <person name="Nieminen K."/>
            <person name="Nilsson O."/>
            <person name="Pereda V."/>
            <person name="Peter G."/>
            <person name="Philippe R."/>
            <person name="Pilate G."/>
            <person name="Poliakov A."/>
            <person name="Razumovskaya J."/>
            <person name="Richardson P."/>
            <person name="Rinaldi C."/>
            <person name="Ritland K."/>
            <person name="Rouze P."/>
            <person name="Ryaboy D."/>
            <person name="Schmutz J."/>
            <person name="Schrader J."/>
            <person name="Segerman B."/>
            <person name="Shin H."/>
            <person name="Siddiqui A."/>
            <person name="Sterky F."/>
            <person name="Terry A."/>
            <person name="Tsai C.-J."/>
            <person name="Uberbacher E."/>
            <person name="Unneberg P."/>
            <person name="Vahala J."/>
            <person name="Wall K."/>
            <person name="Wessler S."/>
            <person name="Yang G."/>
            <person name="Yin T."/>
            <person name="Douglas C."/>
            <person name="Marra M."/>
            <person name="Sandberg G."/>
            <person name="Van de Peer Y."/>
            <person name="Rokhsar D.S."/>
        </authorList>
    </citation>
    <scope>NUCLEOTIDE SEQUENCE [LARGE SCALE GENOMIC DNA]</scope>
    <source>
        <strain>cv. Nisqually</strain>
    </source>
</reference>
<reference key="2">
    <citation type="submission" date="2008-12" db="EMBL/GenBank/DDBJ databases">
        <authorList>
            <consortium name="US DOE Joint Genome Institute (JGI-PGF)"/>
            <person name="Grigoriev I.V."/>
            <person name="Terry A."/>
            <person name="Salamov A.A."/>
            <person name="Otillar R."/>
            <person name="Lou Y."/>
            <person name="Lucas S."/>
            <person name="Hammon N."/>
            <person name="Glavina del Rio T."/>
            <person name="Detter J."/>
            <person name="Kalin E."/>
            <person name="Tice H."/>
            <person name="Pitluck S."/>
            <person name="Chapman J."/>
            <person name="Putnam N.H."/>
            <person name="Brunner A."/>
            <person name="Busov V."/>
            <person name="Campbell M."/>
            <person name="Chalot M."/>
            <person name="Covert S."/>
            <person name="Davis J."/>
            <person name="DiFazio S."/>
            <person name="Gribskov M."/>
            <person name="Gunter L."/>
            <person name="Hamberger B."/>
            <person name="Jansson S."/>
            <person name="Joshi C."/>
            <person name="Larimer F."/>
            <person name="Martin F."/>
            <person name="Napoli C."/>
            <person name="Nelson D."/>
            <person name="Ralph S."/>
            <person name="Rombauts S."/>
            <person name="Rouze P."/>
            <person name="Schrader J."/>
            <person name="Tsai C."/>
            <person name="Vahala J."/>
            <person name="Tuskan G."/>
            <person name="Rokhsar D."/>
        </authorList>
    </citation>
    <scope>GENOME REANNOTATION</scope>
    <source>
        <strain>cv. Nisqually</strain>
    </source>
</reference>
<reference key="3">
    <citation type="journal article" date="2014" name="Plant Physiol.">
        <title>Functional and evolutionary analysis of the CASPARIAN STRIP MEMBRANE DOMAIN PROTEIN family.</title>
        <authorList>
            <person name="Roppolo D."/>
            <person name="Boeckmann B."/>
            <person name="Pfister A."/>
            <person name="Boutet E."/>
            <person name="Rubio M.C."/>
            <person name="Denervaud-Tendon V."/>
            <person name="Vermeer J.E."/>
            <person name="Gheyselinck J."/>
            <person name="Xenarios I."/>
            <person name="Geldner N."/>
        </authorList>
    </citation>
    <scope>GENE FAMILY</scope>
    <scope>NOMENCLATURE</scope>
</reference>
<proteinExistence type="inferred from homology"/>
<name>CSPLA_POPTR</name>
<dbReference type="EMBL" id="CM009300">
    <property type="protein sequence ID" value="EEE98217.1"/>
    <property type="molecule type" value="Genomic_DNA"/>
</dbReference>
<dbReference type="RefSeq" id="XP_002317605.1">
    <property type="nucleotide sequence ID" value="XM_002317569.2"/>
</dbReference>
<dbReference type="SMR" id="B9I0G0"/>
<dbReference type="FunCoup" id="B9I0G0">
    <property type="interactions" value="1098"/>
</dbReference>
<dbReference type="STRING" id="3694.B9I0G0"/>
<dbReference type="EnsemblPlants" id="Potri.011G140200.1.v4.1">
    <property type="protein sequence ID" value="Potri.011G140200.1.v4.1"/>
    <property type="gene ID" value="Potri.011G140200.v4.1"/>
</dbReference>
<dbReference type="Gramene" id="Potri.011G140200.1.v4.1">
    <property type="protein sequence ID" value="Potri.011G140200.1.v4.1"/>
    <property type="gene ID" value="Potri.011G140200.v4.1"/>
</dbReference>
<dbReference type="KEGG" id="pop:7454447"/>
<dbReference type="eggNOG" id="ENOG502S0J7">
    <property type="taxonomic scope" value="Eukaryota"/>
</dbReference>
<dbReference type="HOGENOM" id="CLU_066104_2_2_1"/>
<dbReference type="InParanoid" id="B9I0G0"/>
<dbReference type="OMA" id="TWSQACG"/>
<dbReference type="OrthoDB" id="749363at2759"/>
<dbReference type="Proteomes" id="UP000006729">
    <property type="component" value="Chromosome 11"/>
</dbReference>
<dbReference type="ExpressionAtlas" id="B9I0G0">
    <property type="expression patterns" value="baseline and differential"/>
</dbReference>
<dbReference type="GO" id="GO:0005886">
    <property type="term" value="C:plasma membrane"/>
    <property type="evidence" value="ECO:0007669"/>
    <property type="project" value="UniProtKB-SubCell"/>
</dbReference>
<dbReference type="InterPro" id="IPR006459">
    <property type="entry name" value="CASP/CASPL"/>
</dbReference>
<dbReference type="InterPro" id="IPR006702">
    <property type="entry name" value="CASP_dom"/>
</dbReference>
<dbReference type="NCBIfam" id="TIGR01569">
    <property type="entry name" value="A_tha_TIGR01569"/>
    <property type="match status" value="1"/>
</dbReference>
<dbReference type="PANTHER" id="PTHR33573:SF46">
    <property type="entry name" value="CASP-LIKE PROTEIN 2A1"/>
    <property type="match status" value="1"/>
</dbReference>
<dbReference type="PANTHER" id="PTHR33573">
    <property type="entry name" value="CASP-LIKE PROTEIN 4A4"/>
    <property type="match status" value="1"/>
</dbReference>
<dbReference type="Pfam" id="PF04535">
    <property type="entry name" value="CASP_dom"/>
    <property type="match status" value="1"/>
</dbReference>
<evidence type="ECO:0000250" key="1"/>
<evidence type="ECO:0000255" key="2"/>
<evidence type="ECO:0000256" key="3">
    <source>
        <dbReference type="SAM" id="MobiDB-lite"/>
    </source>
</evidence>
<evidence type="ECO:0000305" key="4"/>
<organism>
    <name type="scientific">Populus trichocarpa</name>
    <name type="common">Western balsam poplar</name>
    <name type="synonym">Populus balsamifera subsp. trichocarpa</name>
    <dbReference type="NCBI Taxonomy" id="3694"/>
    <lineage>
        <taxon>Eukaryota</taxon>
        <taxon>Viridiplantae</taxon>
        <taxon>Streptophyta</taxon>
        <taxon>Embryophyta</taxon>
        <taxon>Tracheophyta</taxon>
        <taxon>Spermatophyta</taxon>
        <taxon>Magnoliopsida</taxon>
        <taxon>eudicotyledons</taxon>
        <taxon>Gunneridae</taxon>
        <taxon>Pentapetalae</taxon>
        <taxon>rosids</taxon>
        <taxon>fabids</taxon>
        <taxon>Malpighiales</taxon>
        <taxon>Salicaceae</taxon>
        <taxon>Saliceae</taxon>
        <taxon>Populus</taxon>
    </lineage>
</organism>
<protein>
    <recommendedName>
        <fullName>CASP-like protein 2A1</fullName>
        <shortName>PtCASPL2A1</shortName>
    </recommendedName>
</protein>
<comment type="subunit">
    <text evidence="1">Homodimer and heterodimers.</text>
</comment>
<comment type="subcellular location">
    <subcellularLocation>
        <location evidence="1">Cell membrane</location>
        <topology evidence="1">Multi-pass membrane protein</topology>
    </subcellularLocation>
</comment>
<comment type="similarity">
    <text evidence="4">Belongs to the Casparian strip membrane proteins (CASP) family.</text>
</comment>
<feature type="chain" id="PRO_0000412041" description="CASP-like protein 2A1">
    <location>
        <begin position="1"/>
        <end position="201"/>
    </location>
</feature>
<feature type="topological domain" description="Cytoplasmic" evidence="2">
    <location>
        <begin position="1"/>
        <end position="30"/>
    </location>
</feature>
<feature type="transmembrane region" description="Helical" evidence="2">
    <location>
        <begin position="31"/>
        <end position="51"/>
    </location>
</feature>
<feature type="topological domain" description="Extracellular" evidence="2">
    <location>
        <begin position="52"/>
        <end position="72"/>
    </location>
</feature>
<feature type="transmembrane region" description="Helical" evidence="2">
    <location>
        <begin position="73"/>
        <end position="93"/>
    </location>
</feature>
<feature type="topological domain" description="Cytoplasmic" evidence="2">
    <location>
        <begin position="94"/>
        <end position="101"/>
    </location>
</feature>
<feature type="transmembrane region" description="Helical" evidence="2">
    <location>
        <begin position="102"/>
        <end position="122"/>
    </location>
</feature>
<feature type="topological domain" description="Extracellular" evidence="2">
    <location>
        <begin position="123"/>
        <end position="152"/>
    </location>
</feature>
<feature type="transmembrane region" description="Helical" evidence="2">
    <location>
        <begin position="153"/>
        <end position="173"/>
    </location>
</feature>
<feature type="topological domain" description="Cytoplasmic" evidence="2">
    <location>
        <begin position="174"/>
        <end position="201"/>
    </location>
</feature>
<feature type="region of interest" description="Disordered" evidence="3">
    <location>
        <begin position="1"/>
        <end position="27"/>
    </location>
</feature>